<reference key="1">
    <citation type="journal article" date="2003" name="Proc. Natl. Acad. Sci. U.S.A.">
        <title>The genome sequence of Clostridium tetani, the causative agent of tetanus disease.</title>
        <authorList>
            <person name="Brueggemann H."/>
            <person name="Baeumer S."/>
            <person name="Fricke W.F."/>
            <person name="Wiezer A."/>
            <person name="Liesegang H."/>
            <person name="Decker I."/>
            <person name="Herzberg C."/>
            <person name="Martinez-Arias R."/>
            <person name="Merkl R."/>
            <person name="Henne A."/>
            <person name="Gottschalk G."/>
        </authorList>
    </citation>
    <scope>NUCLEOTIDE SEQUENCE [LARGE SCALE GENOMIC DNA]</scope>
    <source>
        <strain>Massachusetts / E88</strain>
    </source>
</reference>
<organism>
    <name type="scientific">Clostridium tetani (strain Massachusetts / E88)</name>
    <dbReference type="NCBI Taxonomy" id="212717"/>
    <lineage>
        <taxon>Bacteria</taxon>
        <taxon>Bacillati</taxon>
        <taxon>Bacillota</taxon>
        <taxon>Clostridia</taxon>
        <taxon>Eubacteriales</taxon>
        <taxon>Clostridiaceae</taxon>
        <taxon>Clostridium</taxon>
    </lineage>
</organism>
<dbReference type="EC" id="3.1.26.-" evidence="1"/>
<dbReference type="EMBL" id="AE015927">
    <property type="protein sequence ID" value="AAO37072.1"/>
    <property type="molecule type" value="Genomic_DNA"/>
</dbReference>
<dbReference type="RefSeq" id="WP_011100732.1">
    <property type="nucleotide sequence ID" value="NC_004557.1"/>
</dbReference>
<dbReference type="SMR" id="Q890M5"/>
<dbReference type="STRING" id="212717.CTC_02621"/>
<dbReference type="GeneID" id="24252595"/>
<dbReference type="KEGG" id="ctc:CTC_02621"/>
<dbReference type="HOGENOM" id="CLU_091169_2_1_9"/>
<dbReference type="OrthoDB" id="46571at2"/>
<dbReference type="Proteomes" id="UP000001412">
    <property type="component" value="Chromosome"/>
</dbReference>
<dbReference type="GO" id="GO:0005737">
    <property type="term" value="C:cytoplasm"/>
    <property type="evidence" value="ECO:0007669"/>
    <property type="project" value="UniProtKB-SubCell"/>
</dbReference>
<dbReference type="GO" id="GO:0004525">
    <property type="term" value="F:ribonuclease III activity"/>
    <property type="evidence" value="ECO:0007669"/>
    <property type="project" value="InterPro"/>
</dbReference>
<dbReference type="GO" id="GO:0019843">
    <property type="term" value="F:rRNA binding"/>
    <property type="evidence" value="ECO:0007669"/>
    <property type="project" value="UniProtKB-UniRule"/>
</dbReference>
<dbReference type="GO" id="GO:0006364">
    <property type="term" value="P:rRNA processing"/>
    <property type="evidence" value="ECO:0007669"/>
    <property type="project" value="UniProtKB-UniRule"/>
</dbReference>
<dbReference type="CDD" id="cd00593">
    <property type="entry name" value="RIBOc"/>
    <property type="match status" value="1"/>
</dbReference>
<dbReference type="Gene3D" id="1.10.1520.10">
    <property type="entry name" value="Ribonuclease III domain"/>
    <property type="match status" value="1"/>
</dbReference>
<dbReference type="HAMAP" id="MF_01468">
    <property type="entry name" value="RNase_Mini_III"/>
    <property type="match status" value="1"/>
</dbReference>
<dbReference type="InterPro" id="IPR008226">
    <property type="entry name" value="Mini3_fam"/>
</dbReference>
<dbReference type="InterPro" id="IPR000999">
    <property type="entry name" value="RNase_III_dom"/>
</dbReference>
<dbReference type="InterPro" id="IPR036389">
    <property type="entry name" value="RNase_III_sf"/>
</dbReference>
<dbReference type="PANTHER" id="PTHR34276">
    <property type="entry name" value="MINI-RIBONUCLEASE 3"/>
    <property type="match status" value="1"/>
</dbReference>
<dbReference type="PANTHER" id="PTHR34276:SF1">
    <property type="entry name" value="MINI-RIBONUCLEASE 3"/>
    <property type="match status" value="1"/>
</dbReference>
<dbReference type="Pfam" id="PF00636">
    <property type="entry name" value="Ribonuclease_3"/>
    <property type="match status" value="1"/>
</dbReference>
<dbReference type="PIRSF" id="PIRSF005520">
    <property type="entry name" value="UCP005520"/>
    <property type="match status" value="1"/>
</dbReference>
<dbReference type="SUPFAM" id="SSF69065">
    <property type="entry name" value="RNase III domain-like"/>
    <property type="match status" value="1"/>
</dbReference>
<protein>
    <recommendedName>
        <fullName evidence="1">Mini-ribonuclease 3</fullName>
        <shortName evidence="1">Mini-3</shortName>
        <shortName evidence="1">Mini-RNase 3</shortName>
        <ecNumber evidence="1">3.1.26.-</ecNumber>
    </recommendedName>
    <alternativeName>
        <fullName evidence="1">Mini-RNase III</fullName>
        <shortName evidence="1">Mini-III</shortName>
    </alternativeName>
</protein>
<evidence type="ECO:0000255" key="1">
    <source>
        <dbReference type="HAMAP-Rule" id="MF_01468"/>
    </source>
</evidence>
<proteinExistence type="inferred from homology"/>
<comment type="function">
    <text evidence="1">Involved in correct processing of both the 5' and 3' ends of 23S rRNA precursor. Processes 30S rRNA precursor transcript even in absence of ribonuclease 3 (Rnc); Rnc processes 30S rRNA into smaller rRNA precursors.</text>
</comment>
<comment type="cofactor">
    <cofactor evidence="1">
        <name>Mg(2+)</name>
        <dbReference type="ChEBI" id="CHEBI:18420"/>
    </cofactor>
</comment>
<comment type="subunit">
    <text evidence="1">Homodimer.</text>
</comment>
<comment type="subcellular location">
    <subcellularLocation>
        <location evidence="1">Cytoplasm</location>
    </subcellularLocation>
</comment>
<comment type="similarity">
    <text evidence="1">Belongs to the MrnC RNase family.</text>
</comment>
<feature type="chain" id="PRO_0000415982" description="Mini-ribonuclease 3">
    <location>
        <begin position="1"/>
        <end position="151"/>
    </location>
</feature>
<feature type="active site" evidence="1">
    <location>
        <position position="28"/>
    </location>
</feature>
<accession>Q890M5</accession>
<sequence>MRKYFLGEEFTKQDLKQMNPLVLAYIGDAVYEIFIRTYIISKNKDTCVNKLHKKTIQFVKADAQSYFIREIQKYLNEEEIKVFKRGRNTKSNTSAKNASIQDYRMATGFETVIGYLYLLNEDERLEEIMKLVINLYEESSQNEGENHGSKS</sequence>
<name>MRNC_CLOTE</name>
<gene>
    <name evidence="1" type="primary">mrnC</name>
    <name type="ordered locus">CTC_02621</name>
</gene>
<keyword id="KW-0963">Cytoplasm</keyword>
<keyword id="KW-0255">Endonuclease</keyword>
<keyword id="KW-0378">Hydrolase</keyword>
<keyword id="KW-0460">Magnesium</keyword>
<keyword id="KW-0540">Nuclease</keyword>
<keyword id="KW-1185">Reference proteome</keyword>
<keyword id="KW-0690">Ribosome biogenesis</keyword>
<keyword id="KW-0694">RNA-binding</keyword>
<keyword id="KW-0698">rRNA processing</keyword>
<keyword id="KW-0699">rRNA-binding</keyword>